<gene>
    <name evidence="1" type="primary">ttcA</name>
    <name type="ordered locus">SeD_A1681</name>
</gene>
<organism>
    <name type="scientific">Salmonella dublin (strain CT_02021853)</name>
    <dbReference type="NCBI Taxonomy" id="439851"/>
    <lineage>
        <taxon>Bacteria</taxon>
        <taxon>Pseudomonadati</taxon>
        <taxon>Pseudomonadota</taxon>
        <taxon>Gammaproteobacteria</taxon>
        <taxon>Enterobacterales</taxon>
        <taxon>Enterobacteriaceae</taxon>
        <taxon>Salmonella</taxon>
    </lineage>
</organism>
<accession>B5FUP1</accession>
<keyword id="KW-0004">4Fe-4S</keyword>
<keyword id="KW-0067">ATP-binding</keyword>
<keyword id="KW-0963">Cytoplasm</keyword>
<keyword id="KW-0408">Iron</keyword>
<keyword id="KW-0411">Iron-sulfur</keyword>
<keyword id="KW-0460">Magnesium</keyword>
<keyword id="KW-0479">Metal-binding</keyword>
<keyword id="KW-0547">Nucleotide-binding</keyword>
<keyword id="KW-0694">RNA-binding</keyword>
<keyword id="KW-0808">Transferase</keyword>
<keyword id="KW-0819">tRNA processing</keyword>
<keyword id="KW-0820">tRNA-binding</keyword>
<sequence length="311" mass="35344">MQEIQKNTKKEQYNLNKLQKRLRRNVGEAIADFNMIEEGDRIMVCLSGGKDSYTMLEILRNLQQSAPINFSLVAVNLDQKQPGFPEHILPAYLEQLGVEYKIVEENTYGIVKEKIPEGKTTCSLCSRLRRGILYRTATELGATKIALGHHRDDILQTLFLNMFYGGKMKGMPPKLMSDDGKHIVIRPLAYCREKDIVRFAEAKAFPIIPCNLCGSQPNLQRQVIADMLRDWDKRYPGRIETMFSAMQNVVPSHLCDTNLFDFKGITHGSEVVDGGDLAFDREEIPLQPAGWQPEEDDTALEALRLDVIEVK</sequence>
<protein>
    <recommendedName>
        <fullName evidence="1">tRNA-cytidine(32) 2-sulfurtransferase</fullName>
        <ecNumber evidence="1">2.8.1.-</ecNumber>
    </recommendedName>
    <alternativeName>
        <fullName evidence="1">Two-thiocytidine biosynthesis protein A</fullName>
    </alternativeName>
    <alternativeName>
        <fullName evidence="1">tRNA 2-thiocytidine biosynthesis protein TtcA</fullName>
    </alternativeName>
</protein>
<proteinExistence type="inferred from homology"/>
<reference key="1">
    <citation type="journal article" date="2011" name="J. Bacteriol.">
        <title>Comparative genomics of 28 Salmonella enterica isolates: evidence for CRISPR-mediated adaptive sublineage evolution.</title>
        <authorList>
            <person name="Fricke W.F."/>
            <person name="Mammel M.K."/>
            <person name="McDermott P.F."/>
            <person name="Tartera C."/>
            <person name="White D.G."/>
            <person name="Leclerc J.E."/>
            <person name="Ravel J."/>
            <person name="Cebula T.A."/>
        </authorList>
    </citation>
    <scope>NUCLEOTIDE SEQUENCE [LARGE SCALE GENOMIC DNA]</scope>
    <source>
        <strain>CT_02021853</strain>
    </source>
</reference>
<name>TTCA_SALDC</name>
<feature type="chain" id="PRO_1000188654" description="tRNA-cytidine(32) 2-sulfurtransferase">
    <location>
        <begin position="1"/>
        <end position="311"/>
    </location>
</feature>
<feature type="short sequence motif" description="PP-loop motif" evidence="1">
    <location>
        <begin position="47"/>
        <end position="52"/>
    </location>
</feature>
<feature type="binding site" evidence="1">
    <location>
        <position position="122"/>
    </location>
    <ligand>
        <name>[4Fe-4S] cluster</name>
        <dbReference type="ChEBI" id="CHEBI:49883"/>
    </ligand>
</feature>
<feature type="binding site" evidence="1">
    <location>
        <position position="125"/>
    </location>
    <ligand>
        <name>[4Fe-4S] cluster</name>
        <dbReference type="ChEBI" id="CHEBI:49883"/>
    </ligand>
</feature>
<feature type="binding site" evidence="1">
    <location>
        <position position="213"/>
    </location>
    <ligand>
        <name>[4Fe-4S] cluster</name>
        <dbReference type="ChEBI" id="CHEBI:49883"/>
    </ligand>
</feature>
<evidence type="ECO:0000255" key="1">
    <source>
        <dbReference type="HAMAP-Rule" id="MF_01850"/>
    </source>
</evidence>
<comment type="function">
    <text evidence="1">Catalyzes the ATP-dependent 2-thiolation of cytidine in position 32 of tRNA, to form 2-thiocytidine (s(2)C32). The sulfur atoms are provided by the cysteine/cysteine desulfurase (IscS) system.</text>
</comment>
<comment type="catalytic activity">
    <reaction evidence="1">
        <text>cytidine(32) in tRNA + S-sulfanyl-L-cysteinyl-[cysteine desulfurase] + AH2 + ATP = 2-thiocytidine(32) in tRNA + L-cysteinyl-[cysteine desulfurase] + A + AMP + diphosphate + H(+)</text>
        <dbReference type="Rhea" id="RHEA:57048"/>
        <dbReference type="Rhea" id="RHEA-COMP:10288"/>
        <dbReference type="Rhea" id="RHEA-COMP:12157"/>
        <dbReference type="Rhea" id="RHEA-COMP:12158"/>
        <dbReference type="Rhea" id="RHEA-COMP:14821"/>
        <dbReference type="ChEBI" id="CHEBI:13193"/>
        <dbReference type="ChEBI" id="CHEBI:15378"/>
        <dbReference type="ChEBI" id="CHEBI:17499"/>
        <dbReference type="ChEBI" id="CHEBI:29950"/>
        <dbReference type="ChEBI" id="CHEBI:30616"/>
        <dbReference type="ChEBI" id="CHEBI:33019"/>
        <dbReference type="ChEBI" id="CHEBI:61963"/>
        <dbReference type="ChEBI" id="CHEBI:82748"/>
        <dbReference type="ChEBI" id="CHEBI:141453"/>
        <dbReference type="ChEBI" id="CHEBI:456215"/>
    </reaction>
    <physiologicalReaction direction="left-to-right" evidence="1">
        <dbReference type="Rhea" id="RHEA:57049"/>
    </physiologicalReaction>
</comment>
<comment type="cofactor">
    <cofactor evidence="1">
        <name>Mg(2+)</name>
        <dbReference type="ChEBI" id="CHEBI:18420"/>
    </cofactor>
</comment>
<comment type="cofactor">
    <cofactor evidence="1">
        <name>[4Fe-4S] cluster</name>
        <dbReference type="ChEBI" id="CHEBI:49883"/>
    </cofactor>
    <text evidence="1">Binds 1 [4Fe-4S] cluster per subunit. The cluster is chelated by three Cys residues, the fourth Fe has a free coordination site that may bind a sulfur atom transferred from the persulfide of IscS.</text>
</comment>
<comment type="pathway">
    <text evidence="1">tRNA modification.</text>
</comment>
<comment type="subunit">
    <text evidence="1">Homodimer.</text>
</comment>
<comment type="subcellular location">
    <subcellularLocation>
        <location evidence="1">Cytoplasm</location>
    </subcellularLocation>
</comment>
<comment type="miscellaneous">
    <text evidence="1">The thiolation reaction likely consists of two steps: a first activation step by ATP to form an adenylated intermediate of the target base of tRNA, and a second nucleophilic substitution step of the sulfur (S) atom supplied by the hydrosulfide attached to the Fe-S cluster.</text>
</comment>
<comment type="similarity">
    <text evidence="1">Belongs to the TtcA family.</text>
</comment>
<dbReference type="EC" id="2.8.1.-" evidence="1"/>
<dbReference type="EMBL" id="CP001144">
    <property type="protein sequence ID" value="ACH74722.1"/>
    <property type="molecule type" value="Genomic_DNA"/>
</dbReference>
<dbReference type="RefSeq" id="WP_001156217.1">
    <property type="nucleotide sequence ID" value="NC_011205.1"/>
</dbReference>
<dbReference type="SMR" id="B5FUP1"/>
<dbReference type="KEGG" id="sed:SeD_A1681"/>
<dbReference type="HOGENOM" id="CLU_026481_0_0_6"/>
<dbReference type="Proteomes" id="UP000008322">
    <property type="component" value="Chromosome"/>
</dbReference>
<dbReference type="GO" id="GO:0005737">
    <property type="term" value="C:cytoplasm"/>
    <property type="evidence" value="ECO:0007669"/>
    <property type="project" value="UniProtKB-SubCell"/>
</dbReference>
<dbReference type="GO" id="GO:0051539">
    <property type="term" value="F:4 iron, 4 sulfur cluster binding"/>
    <property type="evidence" value="ECO:0007669"/>
    <property type="project" value="UniProtKB-UniRule"/>
</dbReference>
<dbReference type="GO" id="GO:0005524">
    <property type="term" value="F:ATP binding"/>
    <property type="evidence" value="ECO:0007669"/>
    <property type="project" value="UniProtKB-UniRule"/>
</dbReference>
<dbReference type="GO" id="GO:0000287">
    <property type="term" value="F:magnesium ion binding"/>
    <property type="evidence" value="ECO:0007669"/>
    <property type="project" value="UniProtKB-UniRule"/>
</dbReference>
<dbReference type="GO" id="GO:0016783">
    <property type="term" value="F:sulfurtransferase activity"/>
    <property type="evidence" value="ECO:0007669"/>
    <property type="project" value="UniProtKB-UniRule"/>
</dbReference>
<dbReference type="GO" id="GO:0000049">
    <property type="term" value="F:tRNA binding"/>
    <property type="evidence" value="ECO:0007669"/>
    <property type="project" value="UniProtKB-KW"/>
</dbReference>
<dbReference type="GO" id="GO:0034227">
    <property type="term" value="P:tRNA thio-modification"/>
    <property type="evidence" value="ECO:0007669"/>
    <property type="project" value="UniProtKB-UniRule"/>
</dbReference>
<dbReference type="CDD" id="cd24138">
    <property type="entry name" value="TtcA-like"/>
    <property type="match status" value="1"/>
</dbReference>
<dbReference type="FunFam" id="3.40.50.620:FF:000046">
    <property type="entry name" value="tRNA-cytidine(32) 2-sulfurtransferase"/>
    <property type="match status" value="1"/>
</dbReference>
<dbReference type="Gene3D" id="3.40.50.620">
    <property type="entry name" value="HUPs"/>
    <property type="match status" value="1"/>
</dbReference>
<dbReference type="HAMAP" id="MF_01850">
    <property type="entry name" value="TtcA"/>
    <property type="match status" value="1"/>
</dbReference>
<dbReference type="InterPro" id="IPR014729">
    <property type="entry name" value="Rossmann-like_a/b/a_fold"/>
</dbReference>
<dbReference type="InterPro" id="IPR011063">
    <property type="entry name" value="TilS/TtcA_N"/>
</dbReference>
<dbReference type="InterPro" id="IPR012089">
    <property type="entry name" value="tRNA_Cyd_32_2_STrfase"/>
</dbReference>
<dbReference type="InterPro" id="IPR035107">
    <property type="entry name" value="tRNA_thiolation_TtcA_Ctu1"/>
</dbReference>
<dbReference type="NCBIfam" id="NF007972">
    <property type="entry name" value="PRK10696.1"/>
    <property type="match status" value="1"/>
</dbReference>
<dbReference type="PANTHER" id="PTHR43686:SF1">
    <property type="entry name" value="AMINOTRAN_5 DOMAIN-CONTAINING PROTEIN"/>
    <property type="match status" value="1"/>
</dbReference>
<dbReference type="PANTHER" id="PTHR43686">
    <property type="entry name" value="SULFURTRANSFERASE-RELATED"/>
    <property type="match status" value="1"/>
</dbReference>
<dbReference type="Pfam" id="PF01171">
    <property type="entry name" value="ATP_bind_3"/>
    <property type="match status" value="1"/>
</dbReference>
<dbReference type="PIRSF" id="PIRSF004976">
    <property type="entry name" value="ATPase_YdaO"/>
    <property type="match status" value="1"/>
</dbReference>
<dbReference type="SUPFAM" id="SSF52402">
    <property type="entry name" value="Adenine nucleotide alpha hydrolases-like"/>
    <property type="match status" value="1"/>
</dbReference>